<keyword id="KW-0002">3D-structure</keyword>
<keyword id="KW-0150">Chloroplast</keyword>
<keyword id="KW-0240">DNA-directed RNA polymerase</keyword>
<keyword id="KW-0479">Metal-binding</keyword>
<keyword id="KW-0548">Nucleotidyltransferase</keyword>
<keyword id="KW-0934">Plastid</keyword>
<keyword id="KW-1185">Reference proteome</keyword>
<keyword id="KW-0804">Transcription</keyword>
<keyword id="KW-0808">Transferase</keyword>
<keyword id="KW-0862">Zinc</keyword>
<geneLocation type="chloroplast"/>
<proteinExistence type="evidence at protein level"/>
<dbReference type="EC" id="2.7.7.6" evidence="1"/>
<dbReference type="EMBL" id="AJ400848">
    <property type="protein sequence ID" value="CAB88715.1"/>
    <property type="molecule type" value="Genomic_DNA"/>
</dbReference>
<dbReference type="PIR" id="A29959">
    <property type="entry name" value="A29959"/>
</dbReference>
<dbReference type="RefSeq" id="NP_054922.2">
    <property type="nucleotide sequence ID" value="NC_002202.1"/>
</dbReference>
<dbReference type="PDB" id="8XZV">
    <property type="method" value="EM"/>
    <property type="resolution" value="3.16 A"/>
    <property type="chains" value="D=5-1361"/>
</dbReference>
<dbReference type="PDBsum" id="8XZV"/>
<dbReference type="EMDB" id="EMD-38799"/>
<dbReference type="EMDB" id="EMD-61149"/>
<dbReference type="SMR" id="P11704"/>
<dbReference type="FunCoup" id="P11704">
    <property type="interactions" value="56"/>
</dbReference>
<dbReference type="STRING" id="3562.P11704"/>
<dbReference type="GeneID" id="2715634"/>
<dbReference type="KEGG" id="soe:2715634"/>
<dbReference type="InParanoid" id="P11704"/>
<dbReference type="OrthoDB" id="498011at2759"/>
<dbReference type="Proteomes" id="UP001155700">
    <property type="component" value="Chloroplast Pltd"/>
</dbReference>
<dbReference type="GO" id="GO:0009507">
    <property type="term" value="C:chloroplast"/>
    <property type="evidence" value="ECO:0007669"/>
    <property type="project" value="UniProtKB-SubCell"/>
</dbReference>
<dbReference type="GO" id="GO:0000428">
    <property type="term" value="C:DNA-directed RNA polymerase complex"/>
    <property type="evidence" value="ECO:0007669"/>
    <property type="project" value="UniProtKB-KW"/>
</dbReference>
<dbReference type="GO" id="GO:0005739">
    <property type="term" value="C:mitochondrion"/>
    <property type="evidence" value="ECO:0007669"/>
    <property type="project" value="GOC"/>
</dbReference>
<dbReference type="GO" id="GO:0003677">
    <property type="term" value="F:DNA binding"/>
    <property type="evidence" value="ECO:0007669"/>
    <property type="project" value="UniProtKB-UniRule"/>
</dbReference>
<dbReference type="GO" id="GO:0003899">
    <property type="term" value="F:DNA-directed RNA polymerase activity"/>
    <property type="evidence" value="ECO:0007669"/>
    <property type="project" value="UniProtKB-UniRule"/>
</dbReference>
<dbReference type="GO" id="GO:0008270">
    <property type="term" value="F:zinc ion binding"/>
    <property type="evidence" value="ECO:0007669"/>
    <property type="project" value="UniProtKB-UniRule"/>
</dbReference>
<dbReference type="GO" id="GO:0006351">
    <property type="term" value="P:DNA-templated transcription"/>
    <property type="evidence" value="ECO:0007669"/>
    <property type="project" value="UniProtKB-UniRule"/>
</dbReference>
<dbReference type="CDD" id="cd02655">
    <property type="entry name" value="RNAP_beta'_C"/>
    <property type="match status" value="1"/>
</dbReference>
<dbReference type="FunFam" id="1.10.132.30:FF:000002">
    <property type="entry name" value="DNA-directed RNA polymerase subunit beta"/>
    <property type="match status" value="1"/>
</dbReference>
<dbReference type="FunFam" id="1.10.1790.20:FF:000002">
    <property type="entry name" value="DNA-directed RNA polymerase subunit beta"/>
    <property type="match status" value="1"/>
</dbReference>
<dbReference type="Gene3D" id="1.10.132.30">
    <property type="match status" value="1"/>
</dbReference>
<dbReference type="Gene3D" id="1.10.150.390">
    <property type="match status" value="1"/>
</dbReference>
<dbReference type="Gene3D" id="1.10.1790.20">
    <property type="match status" value="1"/>
</dbReference>
<dbReference type="Gene3D" id="1.10.274.100">
    <property type="entry name" value="RNA polymerase Rpb1, domain 3"/>
    <property type="match status" value="1"/>
</dbReference>
<dbReference type="HAMAP" id="MF_01324">
    <property type="entry name" value="RNApol_bact_RpoC2"/>
    <property type="match status" value="1"/>
</dbReference>
<dbReference type="InterPro" id="IPR012756">
    <property type="entry name" value="DNA-dir_RpoC2_beta_pp"/>
</dbReference>
<dbReference type="InterPro" id="IPR050254">
    <property type="entry name" value="RNA_pol_beta''_euk"/>
</dbReference>
<dbReference type="InterPro" id="IPR042102">
    <property type="entry name" value="RNA_pol_Rpb1_3_sf"/>
</dbReference>
<dbReference type="InterPro" id="IPR007083">
    <property type="entry name" value="RNA_pol_Rpb1_4"/>
</dbReference>
<dbReference type="InterPro" id="IPR007081">
    <property type="entry name" value="RNA_pol_Rpb1_5"/>
</dbReference>
<dbReference type="InterPro" id="IPR038120">
    <property type="entry name" value="Rpb1_funnel_sf"/>
</dbReference>
<dbReference type="NCBIfam" id="TIGR02388">
    <property type="entry name" value="rpoC2_cyan"/>
    <property type="match status" value="1"/>
</dbReference>
<dbReference type="PANTHER" id="PTHR34995">
    <property type="entry name" value="DNA-DIRECTED RNA POLYMERASE SUBUNIT BETA"/>
    <property type="match status" value="1"/>
</dbReference>
<dbReference type="PANTHER" id="PTHR34995:SF1">
    <property type="entry name" value="DNA-DIRECTED RNA POLYMERASE SUBUNIT BETA"/>
    <property type="match status" value="1"/>
</dbReference>
<dbReference type="Pfam" id="PF05000">
    <property type="entry name" value="RNA_pol_Rpb1_4"/>
    <property type="match status" value="1"/>
</dbReference>
<dbReference type="Pfam" id="PF04998">
    <property type="entry name" value="RNA_pol_Rpb1_5"/>
    <property type="match status" value="2"/>
</dbReference>
<dbReference type="SUPFAM" id="SSF64484">
    <property type="entry name" value="beta and beta-prime subunits of DNA dependent RNA-polymerase"/>
    <property type="match status" value="1"/>
</dbReference>
<protein>
    <recommendedName>
        <fullName evidence="1">DNA-directed RNA polymerase subunit beta''</fullName>
        <ecNumber evidence="1">2.7.7.6</ecNumber>
    </recommendedName>
    <alternativeName>
        <fullName evidence="1">PEP</fullName>
    </alternativeName>
    <alternativeName>
        <fullName evidence="1">Plastid-encoded RNA polymerase subunit beta''</fullName>
        <shortName evidence="1">RNA polymerase subunit beta''</shortName>
    </alternativeName>
</protein>
<name>RPOC2_SPIOL</name>
<reference key="1">
    <citation type="journal article" date="1988" name="J. Mol. Biol.">
        <title>Spinach chloroplast rpoBC genes encode three subunits of the chloroplast RNA polymerase.</title>
        <authorList>
            <person name="Hudson G.S."/>
            <person name="Holton T.A."/>
            <person name="Whitfeld P.R."/>
            <person name="Bottomley W."/>
        </authorList>
    </citation>
    <scope>NUCLEOTIDE SEQUENCE [GENOMIC DNA]</scope>
</reference>
<reference key="2">
    <citation type="journal article" date="2001" name="Plant Mol. Biol.">
        <title>The plastid chromosome of spinach (Spinacia oleracea): complete nucleotide sequence and gene organization.</title>
        <authorList>
            <person name="Schmitz-Linneweber C."/>
            <person name="Maier R.M."/>
            <person name="Alcaraz J.-P."/>
            <person name="Cottet A."/>
            <person name="Herrmann R.G."/>
            <person name="Mache R."/>
        </authorList>
    </citation>
    <scope>NUCLEOTIDE SEQUENCE [LARGE SCALE GENOMIC DNA]</scope>
    <source>
        <strain>cv. Geant d'hiver</strain>
        <strain>cv. Monatol</strain>
    </source>
</reference>
<comment type="function">
    <text evidence="1">DNA-dependent RNA polymerase catalyzes the transcription of DNA into RNA using the four ribonucleoside triphosphates as substrates.</text>
</comment>
<comment type="catalytic activity">
    <reaction evidence="1">
        <text>RNA(n) + a ribonucleoside 5'-triphosphate = RNA(n+1) + diphosphate</text>
        <dbReference type="Rhea" id="RHEA:21248"/>
        <dbReference type="Rhea" id="RHEA-COMP:14527"/>
        <dbReference type="Rhea" id="RHEA-COMP:17342"/>
        <dbReference type="ChEBI" id="CHEBI:33019"/>
        <dbReference type="ChEBI" id="CHEBI:61557"/>
        <dbReference type="ChEBI" id="CHEBI:140395"/>
        <dbReference type="EC" id="2.7.7.6"/>
    </reaction>
</comment>
<comment type="cofactor">
    <cofactor evidence="1">
        <name>Zn(2+)</name>
        <dbReference type="ChEBI" id="CHEBI:29105"/>
    </cofactor>
    <text evidence="1">Binds 1 Zn(2+) ion per subunit.</text>
</comment>
<comment type="subunit">
    <text evidence="1">In plastids the minimal PEP RNA polymerase catalytic core is composed of four subunits: alpha, beta, beta', and beta''. When a (nuclear-encoded) sigma factor is associated with the core the holoenzyme is formed, which can initiate transcription.</text>
</comment>
<comment type="subcellular location">
    <subcellularLocation>
        <location evidence="1">Plastid</location>
        <location evidence="1">Chloroplast</location>
    </subcellularLocation>
</comment>
<comment type="similarity">
    <text evidence="1">Belongs to the RNA polymerase beta' chain family. RpoC2 subfamily.</text>
</comment>
<accession>P11704</accession>
<feature type="chain" id="PRO_0000067951" description="DNA-directed RNA polymerase subunit beta''">
    <location>
        <begin position="1"/>
        <end position="1361"/>
    </location>
</feature>
<feature type="binding site" evidence="1">
    <location>
        <position position="224"/>
    </location>
    <ligand>
        <name>Zn(2+)</name>
        <dbReference type="ChEBI" id="CHEBI:29105"/>
    </ligand>
</feature>
<feature type="binding site" evidence="1">
    <location>
        <position position="295"/>
    </location>
    <ligand>
        <name>Zn(2+)</name>
        <dbReference type="ChEBI" id="CHEBI:29105"/>
    </ligand>
</feature>
<feature type="binding site" evidence="1">
    <location>
        <position position="302"/>
    </location>
    <ligand>
        <name>Zn(2+)</name>
        <dbReference type="ChEBI" id="CHEBI:29105"/>
    </ligand>
</feature>
<feature type="binding site" evidence="1">
    <location>
        <position position="305"/>
    </location>
    <ligand>
        <name>Zn(2+)</name>
        <dbReference type="ChEBI" id="CHEBI:29105"/>
    </ligand>
</feature>
<feature type="helix" evidence="2">
    <location>
        <begin position="20"/>
        <end position="34"/>
    </location>
</feature>
<feature type="helix" evidence="2">
    <location>
        <begin position="38"/>
        <end position="56"/>
    </location>
</feature>
<feature type="strand" evidence="2">
    <location>
        <begin position="63"/>
        <end position="66"/>
    </location>
</feature>
<feature type="helix" evidence="2">
    <location>
        <begin position="72"/>
        <end position="89"/>
    </location>
</feature>
<feature type="helix" evidence="2">
    <location>
        <begin position="90"/>
        <end position="92"/>
    </location>
</feature>
<feature type="helix" evidence="2">
    <location>
        <begin position="97"/>
        <end position="117"/>
    </location>
</feature>
<feature type="helix" evidence="2">
    <location>
        <begin position="119"/>
        <end position="126"/>
    </location>
</feature>
<feature type="helix" evidence="2">
    <location>
        <begin position="131"/>
        <end position="137"/>
    </location>
</feature>
<feature type="helix" evidence="2">
    <location>
        <begin position="144"/>
        <end position="150"/>
    </location>
</feature>
<feature type="strand" evidence="2">
    <location>
        <begin position="162"/>
        <end position="164"/>
    </location>
</feature>
<feature type="turn" evidence="2">
    <location>
        <begin position="173"/>
        <end position="175"/>
    </location>
</feature>
<feature type="helix" evidence="2">
    <location>
        <begin position="179"/>
        <end position="190"/>
    </location>
</feature>
<feature type="turn" evidence="2">
    <location>
        <begin position="191"/>
        <end position="198"/>
    </location>
</feature>
<feature type="helix" evidence="2">
    <location>
        <begin position="199"/>
        <end position="213"/>
    </location>
</feature>
<feature type="strand" evidence="2">
    <location>
        <begin position="214"/>
        <end position="216"/>
    </location>
</feature>
<feature type="strand" evidence="2">
    <location>
        <begin position="219"/>
        <end position="222"/>
    </location>
</feature>
<feature type="strand" evidence="2">
    <location>
        <begin position="230"/>
        <end position="232"/>
    </location>
</feature>
<feature type="helix" evidence="2">
    <location>
        <begin position="234"/>
        <end position="236"/>
    </location>
</feature>
<feature type="helix" evidence="2">
    <location>
        <begin position="243"/>
        <end position="248"/>
    </location>
</feature>
<feature type="strand" evidence="2">
    <location>
        <begin position="252"/>
        <end position="255"/>
    </location>
</feature>
<feature type="strand" evidence="2">
    <location>
        <begin position="257"/>
        <end position="261"/>
    </location>
</feature>
<feature type="strand" evidence="2">
    <location>
        <begin position="263"/>
        <end position="265"/>
    </location>
</feature>
<feature type="helix" evidence="2">
    <location>
        <begin position="273"/>
        <end position="280"/>
    </location>
</feature>
<feature type="turn" evidence="2">
    <location>
        <begin position="281"/>
        <end position="283"/>
    </location>
</feature>
<feature type="strand" evidence="2">
    <location>
        <begin position="287"/>
        <end position="290"/>
    </location>
</feature>
<feature type="helix" evidence="2">
    <location>
        <begin position="292"/>
        <end position="294"/>
    </location>
</feature>
<feature type="strand" evidence="2">
    <location>
        <begin position="301"/>
        <end position="303"/>
    </location>
</feature>
<feature type="turn" evidence="2">
    <location>
        <begin position="304"/>
        <end position="306"/>
    </location>
</feature>
<feature type="turn" evidence="2">
    <location>
        <begin position="310"/>
        <end position="313"/>
    </location>
</feature>
<feature type="helix" evidence="2">
    <location>
        <begin position="322"/>
        <end position="329"/>
    </location>
</feature>
<feature type="helix" evidence="2">
    <location>
        <begin position="333"/>
        <end position="335"/>
    </location>
</feature>
<feature type="helix" evidence="2">
    <location>
        <begin position="336"/>
        <end position="339"/>
    </location>
</feature>
<feature type="turn" evidence="2">
    <location>
        <begin position="340"/>
        <end position="343"/>
    </location>
</feature>
<feature type="strand" evidence="2">
    <location>
        <begin position="355"/>
        <end position="357"/>
    </location>
</feature>
<feature type="strand" evidence="2">
    <location>
        <begin position="359"/>
        <end position="365"/>
    </location>
</feature>
<feature type="helix" evidence="2">
    <location>
        <begin position="368"/>
        <end position="370"/>
    </location>
</feature>
<feature type="strand" evidence="2">
    <location>
        <begin position="371"/>
        <end position="375"/>
    </location>
</feature>
<feature type="strand" evidence="2">
    <location>
        <begin position="381"/>
        <end position="387"/>
    </location>
</feature>
<feature type="strand" evidence="2">
    <location>
        <begin position="389"/>
        <end position="393"/>
    </location>
</feature>
<feature type="strand" evidence="2">
    <location>
        <begin position="401"/>
        <end position="404"/>
    </location>
</feature>
<feature type="strand" evidence="2">
    <location>
        <begin position="406"/>
        <end position="410"/>
    </location>
</feature>
<feature type="strand" evidence="2">
    <location>
        <begin position="416"/>
        <end position="418"/>
    </location>
</feature>
<feature type="strand" evidence="2">
    <location>
        <begin position="423"/>
        <end position="426"/>
    </location>
</feature>
<feature type="strand" evidence="2">
    <location>
        <begin position="433"/>
        <end position="436"/>
    </location>
</feature>
<feature type="strand" evidence="2">
    <location>
        <begin position="456"/>
        <end position="458"/>
    </location>
</feature>
<feature type="strand" evidence="2">
    <location>
        <begin position="463"/>
        <end position="467"/>
    </location>
</feature>
<feature type="strand" evidence="2">
    <location>
        <begin position="469"/>
        <end position="471"/>
    </location>
</feature>
<feature type="strand" evidence="2">
    <location>
        <begin position="484"/>
        <end position="487"/>
    </location>
</feature>
<feature type="helix" evidence="2">
    <location>
        <begin position="491"/>
        <end position="493"/>
    </location>
</feature>
<feature type="strand" evidence="2">
    <location>
        <begin position="501"/>
        <end position="503"/>
    </location>
</feature>
<feature type="helix" evidence="2">
    <location>
        <begin position="507"/>
        <end position="512"/>
    </location>
</feature>
<feature type="strand" evidence="2">
    <location>
        <begin position="571"/>
        <end position="573"/>
    </location>
</feature>
<feature type="strand" evidence="2">
    <location>
        <begin position="591"/>
        <end position="593"/>
    </location>
</feature>
<feature type="strand" evidence="2">
    <location>
        <begin position="603"/>
        <end position="610"/>
    </location>
</feature>
<feature type="strand" evidence="2">
    <location>
        <begin position="616"/>
        <end position="619"/>
    </location>
</feature>
<feature type="strand" evidence="2">
    <location>
        <begin position="621"/>
        <end position="625"/>
    </location>
</feature>
<feature type="strand" evidence="2">
    <location>
        <begin position="657"/>
        <end position="663"/>
    </location>
</feature>
<feature type="strand" evidence="2">
    <location>
        <begin position="665"/>
        <end position="670"/>
    </location>
</feature>
<feature type="strand" evidence="2">
    <location>
        <begin position="681"/>
        <end position="683"/>
    </location>
</feature>
<feature type="strand" evidence="2">
    <location>
        <begin position="690"/>
        <end position="692"/>
    </location>
</feature>
<feature type="strand" evidence="2">
    <location>
        <begin position="699"/>
        <end position="705"/>
    </location>
</feature>
<feature type="strand" evidence="2">
    <location>
        <begin position="707"/>
        <end position="714"/>
    </location>
</feature>
<feature type="strand" evidence="2">
    <location>
        <begin position="718"/>
        <end position="720"/>
    </location>
</feature>
<feature type="strand" evidence="2">
    <location>
        <begin position="733"/>
        <end position="736"/>
    </location>
</feature>
<feature type="strand" evidence="2">
    <location>
        <begin position="753"/>
        <end position="758"/>
    </location>
</feature>
<feature type="strand" evidence="2">
    <location>
        <begin position="760"/>
        <end position="763"/>
    </location>
</feature>
<feature type="strand" evidence="2">
    <location>
        <begin position="766"/>
        <end position="771"/>
    </location>
</feature>
<feature type="strand" evidence="2">
    <location>
        <begin position="773"/>
        <end position="776"/>
    </location>
</feature>
<feature type="strand" evidence="2">
    <location>
        <begin position="799"/>
        <end position="808"/>
    </location>
</feature>
<feature type="strand" evidence="2">
    <location>
        <begin position="822"/>
        <end position="832"/>
    </location>
</feature>
<feature type="strand" evidence="2">
    <location>
        <begin position="837"/>
        <end position="839"/>
    </location>
</feature>
<feature type="strand" evidence="2">
    <location>
        <begin position="846"/>
        <end position="854"/>
    </location>
</feature>
<feature type="strand" evidence="2">
    <location>
        <begin position="857"/>
        <end position="865"/>
    </location>
</feature>
<feature type="strand" evidence="2">
    <location>
        <begin position="915"/>
        <end position="920"/>
    </location>
</feature>
<feature type="strand" evidence="2">
    <location>
        <begin position="930"/>
        <end position="934"/>
    </location>
</feature>
<feature type="turn" evidence="2">
    <location>
        <begin position="936"/>
        <end position="938"/>
    </location>
</feature>
<feature type="strand" evidence="2">
    <location>
        <begin position="968"/>
        <end position="971"/>
    </location>
</feature>
<feature type="helix" evidence="2">
    <location>
        <begin position="988"/>
        <end position="990"/>
    </location>
</feature>
<feature type="strand" evidence="2">
    <location>
        <begin position="996"/>
        <end position="999"/>
    </location>
</feature>
<feature type="turn" evidence="2">
    <location>
        <begin position="1012"/>
        <end position="1014"/>
    </location>
</feature>
<feature type="strand" evidence="2">
    <location>
        <begin position="1036"/>
        <end position="1038"/>
    </location>
</feature>
<feature type="strand" evidence="2">
    <location>
        <begin position="1076"/>
        <end position="1078"/>
    </location>
</feature>
<feature type="strand" evidence="2">
    <location>
        <begin position="1102"/>
        <end position="1105"/>
    </location>
</feature>
<feature type="helix" evidence="2">
    <location>
        <begin position="1134"/>
        <end position="1141"/>
    </location>
</feature>
<feature type="strand" evidence="2">
    <location>
        <begin position="1144"/>
        <end position="1146"/>
    </location>
</feature>
<feature type="turn" evidence="2">
    <location>
        <begin position="1150"/>
        <end position="1152"/>
    </location>
</feature>
<feature type="helix" evidence="2">
    <location>
        <begin position="1153"/>
        <end position="1163"/>
    </location>
</feature>
<feature type="strand" evidence="2">
    <location>
        <begin position="1165"/>
        <end position="1168"/>
    </location>
</feature>
<feature type="helix" evidence="2">
    <location>
        <begin position="1170"/>
        <end position="1198"/>
    </location>
</feature>
<feature type="turn" evidence="2">
    <location>
        <begin position="1199"/>
        <end position="1201"/>
    </location>
</feature>
<feature type="helix" evidence="2">
    <location>
        <begin position="1206"/>
        <end position="1216"/>
    </location>
</feature>
<feature type="strand" evidence="2">
    <location>
        <begin position="1228"/>
        <end position="1231"/>
    </location>
</feature>
<feature type="helix" evidence="2">
    <location>
        <begin position="1239"/>
        <end position="1246"/>
    </location>
</feature>
<feature type="helix" evidence="2">
    <location>
        <begin position="1264"/>
        <end position="1267"/>
    </location>
</feature>
<feature type="helix" evidence="2">
    <location>
        <begin position="1272"/>
        <end position="1276"/>
    </location>
</feature>
<feature type="helix" evidence="2">
    <location>
        <begin position="1281"/>
        <end position="1291"/>
    </location>
</feature>
<feature type="helix" evidence="2">
    <location>
        <begin position="1301"/>
        <end position="1305"/>
    </location>
</feature>
<feature type="helix" evidence="2">
    <location>
        <begin position="1313"/>
        <end position="1315"/>
    </location>
</feature>
<gene>
    <name evidence="1" type="primary">rpoC2</name>
</gene>
<organism>
    <name type="scientific">Spinacia oleracea</name>
    <name type="common">Spinach</name>
    <dbReference type="NCBI Taxonomy" id="3562"/>
    <lineage>
        <taxon>Eukaryota</taxon>
        <taxon>Viridiplantae</taxon>
        <taxon>Streptophyta</taxon>
        <taxon>Embryophyta</taxon>
        <taxon>Tracheophyta</taxon>
        <taxon>Spermatophyta</taxon>
        <taxon>Magnoliopsida</taxon>
        <taxon>eudicotyledons</taxon>
        <taxon>Gunneridae</taxon>
        <taxon>Pentapetalae</taxon>
        <taxon>Caryophyllales</taxon>
        <taxon>Chenopodiaceae</taxon>
        <taxon>Chenopodioideae</taxon>
        <taxon>Anserineae</taxon>
        <taxon>Spinacia</taxon>
    </lineage>
</organism>
<sequence length="1361" mass="154769">MEVLMAERANLVFHNKAIDGTAMKRLISRLIDHFGMAYTSHILDQLKTLGFQQATATSISLGIDDLLTIPSKGWLVQDAEQQSLILEKHHHYGNVHAVEKLRQSIEIWYSTSEYLRQEMNPNFRMTDPYNPVHIMSFSGARGNVSQVHQLVGMRGLMSDPQGQMIDLPIQSNLREGLSLTEYIISCYGARKGVVDTAVRTSDAGYLTRRLVEVVQHIVVRRRDCGTIRGISVSPQNSTMPERILIQTLIGRVLADDIYMGSRCIATRNQDIGVGLVNRFITLRTQLISIRTPFTCRSASWICRLCYGRSPTHGGLVELGEAVGIIAGQSIGEPGTQLTLRTFHTGGVFTGGTAEHVRAPSNGKIQFNEDLVHPTRTRHGHPAFLCYIDLYVTIESDDILHNVNIPPKSFLLVQNDQYVESEQVIAEIRAGTSTLNFKERVRKHIYSDSEGEMHWSTDVYHAPEFTYGNVHLLPKTSHLWVLSGKPYRSSVVPFSLSKDQDQMNTHSLSFEQIYISNPSVTNDQVKDKLSDSFSKKEDRITDYSELNRIGHCNLIYPAKNLDLLAKKRRNRFIIPFQGSQERKKELMSLSGISIEIPINGIFRKNSIFAYFDDPRYRRKSSGITKYGTIEMHSIVKKEDLIEYRGVKEFRPKYQMKVDRFFFIPEEVHILAGSSSIMVRNNSIIGVDTWITLNTRSRIGGVVRVERKKKKIELTIFSGDIHFPGETDKISRHSGILIPPSRKNSKDSKNLKKWIYVQRITPTKKKYFVLVRPVVPYEITDGINLATLFPQDLLQERDNVQLRVVNYILYGNGKVTRGISDTSIQLVRTCLVLNWNQDKKGSSIEEARGSFVEVRTNGMIQDFLKVNLVKPAISYISKRNDPSSEKKEGSDHTNMNPFYSIYIYPKTKLQKSFNQNQGTVRTLLGINKECQFFLILSSSNCFRIGPFKGVKYPKELIKKDPLIPIRNSFGPLGTALQIANFFSFYYLITHNQILVTNYLQLDNLKQTFQPFKFQYYLMDENGRIYNPDPCSNIIFNPFKLNWYFLHYHFCEETSTKIDLGQFVCENVCITKKGTHLKSGQVLIVQFDSVVIRSAKPYLATPGATLHGHYGEIIYEGDTLVTFIYEKSRSGDITQGLPKVEQVLEVRSIDSISINLEKRIDSWNERITRILGSPWGFLIGAELTIAQSRISLVNKIQKVYRSQGVQIHNRHIEIIVRQITSKVLVSEDGMSNVFLPGELIGLFRAERTGRALEEAICYRATLLGITRASLNTQSFISEASFQETARVLAKAALRGRIDWLKGLKENVVLGGMIPVGTGFKGFVHHSSQHKDIPLKTKKQNLFEGEMGDILFYHRELFESCLSKN</sequence>
<evidence type="ECO:0000255" key="1">
    <source>
        <dbReference type="HAMAP-Rule" id="MF_01324"/>
    </source>
</evidence>
<evidence type="ECO:0007829" key="2">
    <source>
        <dbReference type="PDB" id="8XZV"/>
    </source>
</evidence>